<dbReference type="EMBL" id="CP001091">
    <property type="protein sequence ID" value="ACE61880.1"/>
    <property type="molecule type" value="Genomic_DNA"/>
</dbReference>
<dbReference type="RefSeq" id="WP_005598105.1">
    <property type="nucleotide sequence ID" value="NC_010939.1"/>
</dbReference>
<dbReference type="SMR" id="B3GY57"/>
<dbReference type="GeneID" id="93219554"/>
<dbReference type="KEGG" id="apa:APP7_1228"/>
<dbReference type="HOGENOM" id="CLU_148710_2_2_6"/>
<dbReference type="Proteomes" id="UP000001226">
    <property type="component" value="Chromosome"/>
</dbReference>
<dbReference type="GO" id="GO:0022627">
    <property type="term" value="C:cytosolic small ribosomal subunit"/>
    <property type="evidence" value="ECO:0007669"/>
    <property type="project" value="TreeGrafter"/>
</dbReference>
<dbReference type="GO" id="GO:0070181">
    <property type="term" value="F:small ribosomal subunit rRNA binding"/>
    <property type="evidence" value="ECO:0007669"/>
    <property type="project" value="TreeGrafter"/>
</dbReference>
<dbReference type="GO" id="GO:0003735">
    <property type="term" value="F:structural constituent of ribosome"/>
    <property type="evidence" value="ECO:0007669"/>
    <property type="project" value="InterPro"/>
</dbReference>
<dbReference type="GO" id="GO:0006412">
    <property type="term" value="P:translation"/>
    <property type="evidence" value="ECO:0007669"/>
    <property type="project" value="UniProtKB-UniRule"/>
</dbReference>
<dbReference type="FunFam" id="4.10.640.10:FF:000001">
    <property type="entry name" value="30S ribosomal protein S18"/>
    <property type="match status" value="1"/>
</dbReference>
<dbReference type="Gene3D" id="4.10.640.10">
    <property type="entry name" value="Ribosomal protein S18"/>
    <property type="match status" value="1"/>
</dbReference>
<dbReference type="HAMAP" id="MF_00270">
    <property type="entry name" value="Ribosomal_bS18"/>
    <property type="match status" value="1"/>
</dbReference>
<dbReference type="InterPro" id="IPR001648">
    <property type="entry name" value="Ribosomal_bS18"/>
</dbReference>
<dbReference type="InterPro" id="IPR018275">
    <property type="entry name" value="Ribosomal_bS18_CS"/>
</dbReference>
<dbReference type="InterPro" id="IPR036870">
    <property type="entry name" value="Ribosomal_bS18_sf"/>
</dbReference>
<dbReference type="NCBIfam" id="TIGR00165">
    <property type="entry name" value="S18"/>
    <property type="match status" value="1"/>
</dbReference>
<dbReference type="PANTHER" id="PTHR13479">
    <property type="entry name" value="30S RIBOSOMAL PROTEIN S18"/>
    <property type="match status" value="1"/>
</dbReference>
<dbReference type="PANTHER" id="PTHR13479:SF40">
    <property type="entry name" value="SMALL RIBOSOMAL SUBUNIT PROTEIN BS18M"/>
    <property type="match status" value="1"/>
</dbReference>
<dbReference type="Pfam" id="PF01084">
    <property type="entry name" value="Ribosomal_S18"/>
    <property type="match status" value="1"/>
</dbReference>
<dbReference type="PRINTS" id="PR00974">
    <property type="entry name" value="RIBOSOMALS18"/>
</dbReference>
<dbReference type="SUPFAM" id="SSF46911">
    <property type="entry name" value="Ribosomal protein S18"/>
    <property type="match status" value="1"/>
</dbReference>
<dbReference type="PROSITE" id="PS00057">
    <property type="entry name" value="RIBOSOMAL_S18"/>
    <property type="match status" value="1"/>
</dbReference>
<feature type="chain" id="PRO_1000114392" description="Small ribosomal subunit protein bS18">
    <location>
        <begin position="1"/>
        <end position="75"/>
    </location>
</feature>
<sequence length="75" mass="8942">MARYFRRRKFCRFTAENVVEIDYKDIATLKNYISESGKIVPSRITGTRAKYQRQLARAIKRARYLALLPYTDNHQ</sequence>
<accession>B3GY57</accession>
<proteinExistence type="inferred from homology"/>
<keyword id="KW-0687">Ribonucleoprotein</keyword>
<keyword id="KW-0689">Ribosomal protein</keyword>
<keyword id="KW-0694">RNA-binding</keyword>
<keyword id="KW-0699">rRNA-binding</keyword>
<reference key="1">
    <citation type="submission" date="2008-06" db="EMBL/GenBank/DDBJ databases">
        <title>Genome and proteome analysis of A. pleuropneumoniae serotype 7.</title>
        <authorList>
            <person name="Linke B."/>
            <person name="Buettner F."/>
            <person name="Martinez-Arias R."/>
            <person name="Goesmann A."/>
            <person name="Baltes N."/>
            <person name="Tegetmeyer H."/>
            <person name="Singh M."/>
            <person name="Gerlach G.F."/>
        </authorList>
    </citation>
    <scope>NUCLEOTIDE SEQUENCE [LARGE SCALE GENOMIC DNA]</scope>
    <source>
        <strain>AP76</strain>
    </source>
</reference>
<comment type="function">
    <text evidence="1">Binds as a heterodimer with protein bS6 to the central domain of the 16S rRNA, where it helps stabilize the platform of the 30S subunit.</text>
</comment>
<comment type="subunit">
    <text evidence="1">Part of the 30S ribosomal subunit. Forms a tight heterodimer with protein bS6.</text>
</comment>
<comment type="similarity">
    <text evidence="1">Belongs to the bacterial ribosomal protein bS18 family.</text>
</comment>
<protein>
    <recommendedName>
        <fullName evidence="1">Small ribosomal subunit protein bS18</fullName>
    </recommendedName>
    <alternativeName>
        <fullName evidence="2">30S ribosomal protein S18</fullName>
    </alternativeName>
</protein>
<organism>
    <name type="scientific">Actinobacillus pleuropneumoniae serotype 7 (strain AP76)</name>
    <dbReference type="NCBI Taxonomy" id="537457"/>
    <lineage>
        <taxon>Bacteria</taxon>
        <taxon>Pseudomonadati</taxon>
        <taxon>Pseudomonadota</taxon>
        <taxon>Gammaproteobacteria</taxon>
        <taxon>Pasteurellales</taxon>
        <taxon>Pasteurellaceae</taxon>
        <taxon>Actinobacillus</taxon>
    </lineage>
</organism>
<name>RS18_ACTP7</name>
<evidence type="ECO:0000255" key="1">
    <source>
        <dbReference type="HAMAP-Rule" id="MF_00270"/>
    </source>
</evidence>
<evidence type="ECO:0000305" key="2"/>
<gene>
    <name evidence="1" type="primary">rpsR</name>
    <name type="ordered locus">APP7_1228</name>
</gene>